<sequence length="745" mass="86105">MPLFKLTGQGKQIDDAMRSFAEKVFASEVKDEGGRHEISPFDVDEICPISLHEMQAHIFHMENLSMDGRRKRRFQGRKTVNLSIPQSETSSTKLSHIEEFISSSPTYESVPDFQRVQITGDYASGVTVEDFEVVCKGLYRALCIREKYMQKSFQRFPKTPSKYLRNIDGEALVGNESFYPVFTPPPKKGEDPFRTEDLPANLGYHLKMKAGVIYIYPDEAAANRDEPKPYPYPNLDDFLDDMNFLLALIAQGPVKTYAHRRLKFLSSKFQVHQMLNEMDELKELKNNPHRDFYNCRKVDTHIHAAACMNQKHLLRFIKKSYHIDADRVVYSTKEKSLTLKELFAKLNMHPYDLTVDSLDVHAGRQTFQRFDKFNDKYNPVGASELRDLYLKTDNYINGEYFATIIKEVGADLVEAKYQHAEPRLSIYGRSPDEWNKLSSWFVCNRIYCPNMTWMIQVPRIYDVFRSKNFLPHFGKMLENIFLPVFEATINPQAHPDLSVFLKHITGFDSVDDESKHSGHMFSSKSPKPEEWTMENNPSYTYYAYYMYANITVLNSLRKERGMNTFLFRPHCGEAGALTHLMTAFMIADNISHGLNLKKSPVLQYLFFLAQIPIAMSPLSNNSLFLEYAKNPFLDFLQKGLMISLSTDDPMQFHFTKEPLMEEYAIAAQVFKLSTCDMCEVARNSVLQCGISHEEKAKFLGNNYLEEGPVGNDIRRTNVAQIRMAYRYETWCYELNLIAEGLKATE</sequence>
<gene>
    <name evidence="6" type="primary">Ampd1</name>
</gene>
<evidence type="ECO:0000250" key="1"/>
<evidence type="ECO:0000250" key="2">
    <source>
        <dbReference type="UniProtKB" id="P10759"/>
    </source>
</evidence>
<evidence type="ECO:0000250" key="3">
    <source>
        <dbReference type="UniProtKB" id="P23109"/>
    </source>
</evidence>
<evidence type="ECO:0000255" key="4">
    <source>
        <dbReference type="PROSITE-ProRule" id="PRU10104"/>
    </source>
</evidence>
<evidence type="ECO:0000305" key="5"/>
<evidence type="ECO:0000312" key="6">
    <source>
        <dbReference type="MGI" id="MGI:88015"/>
    </source>
</evidence>
<dbReference type="EC" id="3.5.4.6" evidence="3"/>
<dbReference type="EMBL" id="AK132524">
    <property type="protein sequence ID" value="BAE21218.1"/>
    <property type="molecule type" value="mRNA"/>
</dbReference>
<dbReference type="EMBL" id="AC150894">
    <property type="status" value="NOT_ANNOTATED_CDS"/>
    <property type="molecule type" value="Genomic_DNA"/>
</dbReference>
<dbReference type="EMBL" id="AC163297">
    <property type="status" value="NOT_ANNOTATED_CDS"/>
    <property type="molecule type" value="Genomic_DNA"/>
</dbReference>
<dbReference type="CCDS" id="CCDS38571.1"/>
<dbReference type="RefSeq" id="NP_001028475.2">
    <property type="nucleotide sequence ID" value="NM_001033303.2"/>
</dbReference>
<dbReference type="SMR" id="Q3V1D3"/>
<dbReference type="BioGRID" id="230879">
    <property type="interactions" value="4"/>
</dbReference>
<dbReference type="FunCoup" id="Q3V1D3">
    <property type="interactions" value="427"/>
</dbReference>
<dbReference type="IntAct" id="Q3V1D3">
    <property type="interactions" value="1"/>
</dbReference>
<dbReference type="STRING" id="10090.ENSMUSP00000088217"/>
<dbReference type="BindingDB" id="Q3V1D3"/>
<dbReference type="iPTMnet" id="Q3V1D3"/>
<dbReference type="PhosphoSitePlus" id="Q3V1D3"/>
<dbReference type="jPOST" id="Q3V1D3"/>
<dbReference type="PaxDb" id="10090-ENSMUSP00000088217"/>
<dbReference type="PeptideAtlas" id="Q3V1D3"/>
<dbReference type="ProteomicsDB" id="296350"/>
<dbReference type="Antibodypedia" id="33863">
    <property type="antibodies" value="250 antibodies from 31 providers"/>
</dbReference>
<dbReference type="Ensembl" id="ENSMUST00000090715.13">
    <property type="protein sequence ID" value="ENSMUSP00000088217.7"/>
    <property type="gene ID" value="ENSMUSG00000070385.13"/>
</dbReference>
<dbReference type="GeneID" id="229665"/>
<dbReference type="KEGG" id="mmu:229665"/>
<dbReference type="UCSC" id="uc008qso.1">
    <property type="organism name" value="mouse"/>
</dbReference>
<dbReference type="AGR" id="MGI:88015"/>
<dbReference type="CTD" id="270"/>
<dbReference type="MGI" id="MGI:88015">
    <property type="gene designation" value="Ampd1"/>
</dbReference>
<dbReference type="VEuPathDB" id="HostDB:ENSMUSG00000070385"/>
<dbReference type="eggNOG" id="KOG1096">
    <property type="taxonomic scope" value="Eukaryota"/>
</dbReference>
<dbReference type="GeneTree" id="ENSGT00950000183011"/>
<dbReference type="HOGENOM" id="CLU_003782_4_0_1"/>
<dbReference type="InParanoid" id="Q3V1D3"/>
<dbReference type="OMA" id="SHHEMQE"/>
<dbReference type="OrthoDB" id="1723809at2759"/>
<dbReference type="PhylomeDB" id="Q3V1D3"/>
<dbReference type="TreeFam" id="TF300439"/>
<dbReference type="Reactome" id="R-MMU-74217">
    <property type="pathway name" value="Purine salvage"/>
</dbReference>
<dbReference type="UniPathway" id="UPA00591">
    <property type="reaction ID" value="UER00663"/>
</dbReference>
<dbReference type="BioGRID-ORCS" id="229665">
    <property type="hits" value="4 hits in 76 CRISPR screens"/>
</dbReference>
<dbReference type="PRO" id="PR:Q3V1D3"/>
<dbReference type="Proteomes" id="UP000000589">
    <property type="component" value="Chromosome 3"/>
</dbReference>
<dbReference type="RNAct" id="Q3V1D3">
    <property type="molecule type" value="protein"/>
</dbReference>
<dbReference type="Bgee" id="ENSMUSG00000070385">
    <property type="expression patterns" value="Expressed in quadriceps femoris and 37 other cell types or tissues"/>
</dbReference>
<dbReference type="ExpressionAtlas" id="Q3V1D3">
    <property type="expression patterns" value="baseline and differential"/>
</dbReference>
<dbReference type="GO" id="GO:0003876">
    <property type="term" value="F:AMP deaminase activity"/>
    <property type="evidence" value="ECO:0000315"/>
    <property type="project" value="MGI"/>
</dbReference>
<dbReference type="GO" id="GO:0042802">
    <property type="term" value="F:identical protein binding"/>
    <property type="evidence" value="ECO:0007669"/>
    <property type="project" value="Ensembl"/>
</dbReference>
<dbReference type="GO" id="GO:0046872">
    <property type="term" value="F:metal ion binding"/>
    <property type="evidence" value="ECO:0007669"/>
    <property type="project" value="UniProtKB-KW"/>
</dbReference>
<dbReference type="GO" id="GO:0032263">
    <property type="term" value="P:GMP salvage"/>
    <property type="evidence" value="ECO:0000266"/>
    <property type="project" value="MGI"/>
</dbReference>
<dbReference type="GO" id="GO:0032264">
    <property type="term" value="P:IMP salvage"/>
    <property type="evidence" value="ECO:0000315"/>
    <property type="project" value="MGI"/>
</dbReference>
<dbReference type="CDD" id="cd01319">
    <property type="entry name" value="AMPD"/>
    <property type="match status" value="1"/>
</dbReference>
<dbReference type="FunFam" id="4.10.800.20:FF:000001">
    <property type="entry name" value="AMP deaminase"/>
    <property type="match status" value="1"/>
</dbReference>
<dbReference type="Gene3D" id="4.10.800.20">
    <property type="match status" value="1"/>
</dbReference>
<dbReference type="Gene3D" id="3.20.20.140">
    <property type="entry name" value="Metal-dependent hydrolases"/>
    <property type="match status" value="1"/>
</dbReference>
<dbReference type="InterPro" id="IPR006650">
    <property type="entry name" value="A/AMP_deam_AS"/>
</dbReference>
<dbReference type="InterPro" id="IPR006329">
    <property type="entry name" value="AMPD"/>
</dbReference>
<dbReference type="InterPro" id="IPR032466">
    <property type="entry name" value="Metal_Hydrolase"/>
</dbReference>
<dbReference type="NCBIfam" id="TIGR01429">
    <property type="entry name" value="AMP_deaminase"/>
    <property type="match status" value="1"/>
</dbReference>
<dbReference type="PANTHER" id="PTHR11359">
    <property type="entry name" value="AMP DEAMINASE"/>
    <property type="match status" value="1"/>
</dbReference>
<dbReference type="PANTHER" id="PTHR11359:SF1">
    <property type="entry name" value="AMP DEAMINASE 1"/>
    <property type="match status" value="1"/>
</dbReference>
<dbReference type="Pfam" id="PF19326">
    <property type="entry name" value="AMP_deaminase"/>
    <property type="match status" value="1"/>
</dbReference>
<dbReference type="PIRSF" id="PIRSF001251">
    <property type="entry name" value="AMP_deaminase_met"/>
    <property type="match status" value="1"/>
</dbReference>
<dbReference type="SUPFAM" id="SSF51556">
    <property type="entry name" value="Metallo-dependent hydrolases"/>
    <property type="match status" value="1"/>
</dbReference>
<dbReference type="PROSITE" id="PS00485">
    <property type="entry name" value="A_DEAMINASE"/>
    <property type="match status" value="1"/>
</dbReference>
<accession>Q3V1D3</accession>
<accession>F8VPY9</accession>
<protein>
    <recommendedName>
        <fullName evidence="5">AMP deaminase 1</fullName>
        <ecNumber evidence="3">3.5.4.6</ecNumber>
    </recommendedName>
    <alternativeName>
        <fullName>AMP deaminase isoform M</fullName>
    </alternativeName>
    <alternativeName>
        <fullName>Myoadenylate deaminase</fullName>
    </alternativeName>
</protein>
<comment type="function">
    <text evidence="3">AMP deaminase plays a critical role in energy metabolism.</text>
</comment>
<comment type="catalytic activity">
    <reaction evidence="3">
        <text>AMP + H2O + H(+) = IMP + NH4(+)</text>
        <dbReference type="Rhea" id="RHEA:14777"/>
        <dbReference type="ChEBI" id="CHEBI:15377"/>
        <dbReference type="ChEBI" id="CHEBI:15378"/>
        <dbReference type="ChEBI" id="CHEBI:28938"/>
        <dbReference type="ChEBI" id="CHEBI:58053"/>
        <dbReference type="ChEBI" id="CHEBI:456215"/>
        <dbReference type="EC" id="3.5.4.6"/>
    </reaction>
    <physiologicalReaction direction="left-to-right" evidence="3">
        <dbReference type="Rhea" id="RHEA:14778"/>
    </physiologicalReaction>
</comment>
<comment type="cofactor">
    <cofactor evidence="1">
        <name>Zn(2+)</name>
        <dbReference type="ChEBI" id="CHEBI:29105"/>
    </cofactor>
    <text evidence="1">Binds 1 zinc ion per subunit.</text>
</comment>
<comment type="pathway">
    <text evidence="3">Purine metabolism; IMP biosynthesis via salvage pathway; IMP from AMP: step 1/1.</text>
</comment>
<comment type="subunit">
    <text evidence="1">Homotetramer.</text>
</comment>
<comment type="similarity">
    <text evidence="5">Belongs to the metallo-dependent hydrolases superfamily. Adenosine and AMP deaminases family.</text>
</comment>
<feature type="chain" id="PRO_0000269718" description="AMP deaminase 1">
    <location>
        <begin position="1"/>
        <end position="745"/>
    </location>
</feature>
<feature type="active site" description="Proton acceptor" evidence="4">
    <location>
        <position position="592"/>
    </location>
</feature>
<feature type="binding site" evidence="1">
    <location>
        <position position="301"/>
    </location>
    <ligand>
        <name>Zn(2+)</name>
        <dbReference type="ChEBI" id="CHEBI:29105"/>
        <note>catalytic</note>
    </ligand>
</feature>
<feature type="binding site" evidence="1">
    <location>
        <position position="303"/>
    </location>
    <ligand>
        <name>substrate</name>
    </ligand>
</feature>
<feature type="binding site" evidence="1">
    <location>
        <position position="303"/>
    </location>
    <ligand>
        <name>Zn(2+)</name>
        <dbReference type="ChEBI" id="CHEBI:29105"/>
        <note>catalytic</note>
    </ligand>
</feature>
<feature type="binding site" evidence="1">
    <location>
        <begin position="372"/>
        <end position="377"/>
    </location>
    <ligand>
        <name>substrate</name>
    </ligand>
</feature>
<feature type="binding site" evidence="1">
    <location>
        <position position="570"/>
    </location>
    <ligand>
        <name>Zn(2+)</name>
        <dbReference type="ChEBI" id="CHEBI:29105"/>
        <note>catalytic</note>
    </ligand>
</feature>
<feature type="binding site" evidence="1">
    <location>
        <position position="573"/>
    </location>
    <ligand>
        <name>substrate</name>
    </ligand>
</feature>
<feature type="binding site" evidence="1">
    <location>
        <position position="647"/>
    </location>
    <ligand>
        <name>Zn(2+)</name>
        <dbReference type="ChEBI" id="CHEBI:29105"/>
        <note>catalytic</note>
    </ligand>
</feature>
<feature type="binding site" evidence="1">
    <location>
        <begin position="648"/>
        <end position="651"/>
    </location>
    <ligand>
        <name>substrate</name>
    </ligand>
</feature>
<feature type="modified residue" description="Phosphothreonine" evidence="2">
    <location>
        <position position="79"/>
    </location>
</feature>
<feature type="modified residue" description="Phosphoserine" evidence="2">
    <location>
        <position position="83"/>
    </location>
</feature>
<feature type="modified residue" description="Phosphotyrosine" evidence="2">
    <location>
        <position position="214"/>
    </location>
</feature>
<feature type="modified residue" description="Phosphoserine" evidence="2">
    <location>
        <position position="439"/>
    </location>
</feature>
<feature type="sequence conflict" description="In Ref. 1; BAE21218." evidence="5" ref="1">
    <original>E</original>
    <variation>D</variation>
    <location>
        <position position="226"/>
    </location>
</feature>
<feature type="sequence conflict" description="In Ref. 1; BAE21218." evidence="5" ref="1">
    <original>E</original>
    <variation>G</variation>
    <location>
        <position position="534"/>
    </location>
</feature>
<proteinExistence type="evidence at protein level"/>
<reference key="1">
    <citation type="journal article" date="2005" name="Science">
        <title>The transcriptional landscape of the mammalian genome.</title>
        <authorList>
            <person name="Carninci P."/>
            <person name="Kasukawa T."/>
            <person name="Katayama S."/>
            <person name="Gough J."/>
            <person name="Frith M.C."/>
            <person name="Maeda N."/>
            <person name="Oyama R."/>
            <person name="Ravasi T."/>
            <person name="Lenhard B."/>
            <person name="Wells C."/>
            <person name="Kodzius R."/>
            <person name="Shimokawa K."/>
            <person name="Bajic V.B."/>
            <person name="Brenner S.E."/>
            <person name="Batalov S."/>
            <person name="Forrest A.R."/>
            <person name="Zavolan M."/>
            <person name="Davis M.J."/>
            <person name="Wilming L.G."/>
            <person name="Aidinis V."/>
            <person name="Allen J.E."/>
            <person name="Ambesi-Impiombato A."/>
            <person name="Apweiler R."/>
            <person name="Aturaliya R.N."/>
            <person name="Bailey T.L."/>
            <person name="Bansal M."/>
            <person name="Baxter L."/>
            <person name="Beisel K.W."/>
            <person name="Bersano T."/>
            <person name="Bono H."/>
            <person name="Chalk A.M."/>
            <person name="Chiu K.P."/>
            <person name="Choudhary V."/>
            <person name="Christoffels A."/>
            <person name="Clutterbuck D.R."/>
            <person name="Crowe M.L."/>
            <person name="Dalla E."/>
            <person name="Dalrymple B.P."/>
            <person name="de Bono B."/>
            <person name="Della Gatta G."/>
            <person name="di Bernardo D."/>
            <person name="Down T."/>
            <person name="Engstrom P."/>
            <person name="Fagiolini M."/>
            <person name="Faulkner G."/>
            <person name="Fletcher C.F."/>
            <person name="Fukushima T."/>
            <person name="Furuno M."/>
            <person name="Futaki S."/>
            <person name="Gariboldi M."/>
            <person name="Georgii-Hemming P."/>
            <person name="Gingeras T.R."/>
            <person name="Gojobori T."/>
            <person name="Green R.E."/>
            <person name="Gustincich S."/>
            <person name="Harbers M."/>
            <person name="Hayashi Y."/>
            <person name="Hensch T.K."/>
            <person name="Hirokawa N."/>
            <person name="Hill D."/>
            <person name="Huminiecki L."/>
            <person name="Iacono M."/>
            <person name="Ikeo K."/>
            <person name="Iwama A."/>
            <person name="Ishikawa T."/>
            <person name="Jakt M."/>
            <person name="Kanapin A."/>
            <person name="Katoh M."/>
            <person name="Kawasawa Y."/>
            <person name="Kelso J."/>
            <person name="Kitamura H."/>
            <person name="Kitano H."/>
            <person name="Kollias G."/>
            <person name="Krishnan S.P."/>
            <person name="Kruger A."/>
            <person name="Kummerfeld S.K."/>
            <person name="Kurochkin I.V."/>
            <person name="Lareau L.F."/>
            <person name="Lazarevic D."/>
            <person name="Lipovich L."/>
            <person name="Liu J."/>
            <person name="Liuni S."/>
            <person name="McWilliam S."/>
            <person name="Madan Babu M."/>
            <person name="Madera M."/>
            <person name="Marchionni L."/>
            <person name="Matsuda H."/>
            <person name="Matsuzawa S."/>
            <person name="Miki H."/>
            <person name="Mignone F."/>
            <person name="Miyake S."/>
            <person name="Morris K."/>
            <person name="Mottagui-Tabar S."/>
            <person name="Mulder N."/>
            <person name="Nakano N."/>
            <person name="Nakauchi H."/>
            <person name="Ng P."/>
            <person name="Nilsson R."/>
            <person name="Nishiguchi S."/>
            <person name="Nishikawa S."/>
            <person name="Nori F."/>
            <person name="Ohara O."/>
            <person name="Okazaki Y."/>
            <person name="Orlando V."/>
            <person name="Pang K.C."/>
            <person name="Pavan W.J."/>
            <person name="Pavesi G."/>
            <person name="Pesole G."/>
            <person name="Petrovsky N."/>
            <person name="Piazza S."/>
            <person name="Reed J."/>
            <person name="Reid J.F."/>
            <person name="Ring B.Z."/>
            <person name="Ringwald M."/>
            <person name="Rost B."/>
            <person name="Ruan Y."/>
            <person name="Salzberg S.L."/>
            <person name="Sandelin A."/>
            <person name="Schneider C."/>
            <person name="Schoenbach C."/>
            <person name="Sekiguchi K."/>
            <person name="Semple C.A."/>
            <person name="Seno S."/>
            <person name="Sessa L."/>
            <person name="Sheng Y."/>
            <person name="Shibata Y."/>
            <person name="Shimada H."/>
            <person name="Shimada K."/>
            <person name="Silva D."/>
            <person name="Sinclair B."/>
            <person name="Sperling S."/>
            <person name="Stupka E."/>
            <person name="Sugiura K."/>
            <person name="Sultana R."/>
            <person name="Takenaka Y."/>
            <person name="Taki K."/>
            <person name="Tammoja K."/>
            <person name="Tan S.L."/>
            <person name="Tang S."/>
            <person name="Taylor M.S."/>
            <person name="Tegner J."/>
            <person name="Teichmann S.A."/>
            <person name="Ueda H.R."/>
            <person name="van Nimwegen E."/>
            <person name="Verardo R."/>
            <person name="Wei C.L."/>
            <person name="Yagi K."/>
            <person name="Yamanishi H."/>
            <person name="Zabarovsky E."/>
            <person name="Zhu S."/>
            <person name="Zimmer A."/>
            <person name="Hide W."/>
            <person name="Bult C."/>
            <person name="Grimmond S.M."/>
            <person name="Teasdale R.D."/>
            <person name="Liu E.T."/>
            <person name="Brusic V."/>
            <person name="Quackenbush J."/>
            <person name="Wahlestedt C."/>
            <person name="Mattick J.S."/>
            <person name="Hume D.A."/>
            <person name="Kai C."/>
            <person name="Sasaki D."/>
            <person name="Tomaru Y."/>
            <person name="Fukuda S."/>
            <person name="Kanamori-Katayama M."/>
            <person name="Suzuki M."/>
            <person name="Aoki J."/>
            <person name="Arakawa T."/>
            <person name="Iida J."/>
            <person name="Imamura K."/>
            <person name="Itoh M."/>
            <person name="Kato T."/>
            <person name="Kawaji H."/>
            <person name="Kawagashira N."/>
            <person name="Kawashima T."/>
            <person name="Kojima M."/>
            <person name="Kondo S."/>
            <person name="Konno H."/>
            <person name="Nakano K."/>
            <person name="Ninomiya N."/>
            <person name="Nishio T."/>
            <person name="Okada M."/>
            <person name="Plessy C."/>
            <person name="Shibata K."/>
            <person name="Shiraki T."/>
            <person name="Suzuki S."/>
            <person name="Tagami M."/>
            <person name="Waki K."/>
            <person name="Watahiki A."/>
            <person name="Okamura-Oho Y."/>
            <person name="Suzuki H."/>
            <person name="Kawai J."/>
            <person name="Hayashizaki Y."/>
        </authorList>
    </citation>
    <scope>NUCLEOTIDE SEQUENCE [LARGE SCALE MRNA]</scope>
    <source>
        <strain>C57BL/6J</strain>
        <tissue>Skin</tissue>
    </source>
</reference>
<reference key="2">
    <citation type="journal article" date="2009" name="PLoS Biol.">
        <title>Lineage-specific biology revealed by a finished genome assembly of the mouse.</title>
        <authorList>
            <person name="Church D.M."/>
            <person name="Goodstadt L."/>
            <person name="Hillier L.W."/>
            <person name="Zody M.C."/>
            <person name="Goldstein S."/>
            <person name="She X."/>
            <person name="Bult C.J."/>
            <person name="Agarwala R."/>
            <person name="Cherry J.L."/>
            <person name="DiCuccio M."/>
            <person name="Hlavina W."/>
            <person name="Kapustin Y."/>
            <person name="Meric P."/>
            <person name="Maglott D."/>
            <person name="Birtle Z."/>
            <person name="Marques A.C."/>
            <person name="Graves T."/>
            <person name="Zhou S."/>
            <person name="Teague B."/>
            <person name="Potamousis K."/>
            <person name="Churas C."/>
            <person name="Place M."/>
            <person name="Herschleb J."/>
            <person name="Runnheim R."/>
            <person name="Forrest D."/>
            <person name="Amos-Landgraf J."/>
            <person name="Schwartz D.C."/>
            <person name="Cheng Z."/>
            <person name="Lindblad-Toh K."/>
            <person name="Eichler E.E."/>
            <person name="Ponting C.P."/>
        </authorList>
    </citation>
    <scope>NUCLEOTIDE SEQUENCE [LARGE SCALE GENOMIC DNA]</scope>
    <source>
        <strain>C57BL/6J</strain>
    </source>
</reference>
<reference key="3">
    <citation type="journal article" date="2010" name="Cell">
        <title>A tissue-specific atlas of mouse protein phosphorylation and expression.</title>
        <authorList>
            <person name="Huttlin E.L."/>
            <person name="Jedrychowski M.P."/>
            <person name="Elias J.E."/>
            <person name="Goswami T."/>
            <person name="Rad R."/>
            <person name="Beausoleil S.A."/>
            <person name="Villen J."/>
            <person name="Haas W."/>
            <person name="Sowa M.E."/>
            <person name="Gygi S.P."/>
        </authorList>
    </citation>
    <scope>IDENTIFICATION BY MASS SPECTROMETRY [LARGE SCALE ANALYSIS]</scope>
    <source>
        <tissue>Brown adipose tissue</tissue>
    </source>
</reference>
<organism>
    <name type="scientific">Mus musculus</name>
    <name type="common">Mouse</name>
    <dbReference type="NCBI Taxonomy" id="10090"/>
    <lineage>
        <taxon>Eukaryota</taxon>
        <taxon>Metazoa</taxon>
        <taxon>Chordata</taxon>
        <taxon>Craniata</taxon>
        <taxon>Vertebrata</taxon>
        <taxon>Euteleostomi</taxon>
        <taxon>Mammalia</taxon>
        <taxon>Eutheria</taxon>
        <taxon>Euarchontoglires</taxon>
        <taxon>Glires</taxon>
        <taxon>Rodentia</taxon>
        <taxon>Myomorpha</taxon>
        <taxon>Muroidea</taxon>
        <taxon>Muridae</taxon>
        <taxon>Murinae</taxon>
        <taxon>Mus</taxon>
        <taxon>Mus</taxon>
    </lineage>
</organism>
<keyword id="KW-0378">Hydrolase</keyword>
<keyword id="KW-0479">Metal-binding</keyword>
<keyword id="KW-0546">Nucleotide metabolism</keyword>
<keyword id="KW-0597">Phosphoprotein</keyword>
<keyword id="KW-1185">Reference proteome</keyword>
<keyword id="KW-0862">Zinc</keyword>
<name>AMPD1_MOUSE</name>